<comment type="subcellular location">
    <subcellularLocation>
        <location evidence="2">Cell membrane</location>
        <topology evidence="2">Multi-pass membrane protein</topology>
    </subcellularLocation>
</comment>
<comment type="similarity">
    <text evidence="2">Belongs to the autoinducer-2 exporter (AI-2E) (TC 2.A.86) family.</text>
</comment>
<reference key="1">
    <citation type="journal article" date="1995" name="Science">
        <title>Whole-genome random sequencing and assembly of Haemophilus influenzae Rd.</title>
        <authorList>
            <person name="Fleischmann R.D."/>
            <person name="Adams M.D."/>
            <person name="White O."/>
            <person name="Clayton R.A."/>
            <person name="Kirkness E.F."/>
            <person name="Kerlavage A.R."/>
            <person name="Bult C.J."/>
            <person name="Tomb J.-F."/>
            <person name="Dougherty B.A."/>
            <person name="Merrick J.M."/>
            <person name="McKenney K."/>
            <person name="Sutton G.G."/>
            <person name="FitzHugh W."/>
            <person name="Fields C.A."/>
            <person name="Gocayne J.D."/>
            <person name="Scott J.D."/>
            <person name="Shirley R."/>
            <person name="Liu L.-I."/>
            <person name="Glodek A."/>
            <person name="Kelley J.M."/>
            <person name="Weidman J.F."/>
            <person name="Phillips C.A."/>
            <person name="Spriggs T."/>
            <person name="Hedblom E."/>
            <person name="Cotton M.D."/>
            <person name="Utterback T.R."/>
            <person name="Hanna M.C."/>
            <person name="Nguyen D.T."/>
            <person name="Saudek D.M."/>
            <person name="Brandon R.C."/>
            <person name="Fine L.D."/>
            <person name="Fritchman J.L."/>
            <person name="Fuhrmann J.L."/>
            <person name="Geoghagen N.S.M."/>
            <person name="Gnehm C.L."/>
            <person name="McDonald L.A."/>
            <person name="Small K.V."/>
            <person name="Fraser C.M."/>
            <person name="Smith H.O."/>
            <person name="Venter J.C."/>
        </authorList>
    </citation>
    <scope>NUCLEOTIDE SEQUENCE [LARGE SCALE GENOMIC DNA]</scope>
    <source>
        <strain>ATCC 51907 / DSM 11121 / KW20 / Rd</strain>
    </source>
</reference>
<gene>
    <name type="ordered locus">HI_0338</name>
</gene>
<protein>
    <recommendedName>
        <fullName>Putative transport protein HI_0338</fullName>
    </recommendedName>
</protein>
<sequence>MQNNLNLHRTLLGIAAVIIILAGVKLAAEIVVPFLLSLFIAIICSPIIKAMTQRRVPHWLAITLLFVLISLVFFFLVGLINSTAREFTQSIPQYKVLLSQRVSDLTGLLQRFNLPFTLSRETIQENFDPSIIMNFVSRVLLNFSGVVSNVFVLVLVVIFMLAEAPTMKHKFAMVISSTPHDVAKEERHIDRVLQGVIGYLGIKSITSLLTGVGVFILLEACRVQYAILWATLSFLLNYIPNIGSIIAAIPIIVQALLLNGFGIGFGVAIGVIAINMVVGNIIEPKMMGQRLGLSTLVVFLSLLFWGWLLGTVGMLLSVPLTMALKIALESSPNTAKYACLLGDVEDFK</sequence>
<accession>P44646</accession>
<name>Y338_HAEIN</name>
<keyword id="KW-1003">Cell membrane</keyword>
<keyword id="KW-0472">Membrane</keyword>
<keyword id="KW-1185">Reference proteome</keyword>
<keyword id="KW-0812">Transmembrane</keyword>
<keyword id="KW-1133">Transmembrane helix</keyword>
<keyword id="KW-0813">Transport</keyword>
<dbReference type="EMBL" id="L42023">
    <property type="protein sequence ID" value="AAC22000.1"/>
    <property type="molecule type" value="Genomic_DNA"/>
</dbReference>
<dbReference type="PIR" id="E64148">
    <property type="entry name" value="E64148"/>
</dbReference>
<dbReference type="RefSeq" id="NP_438502.1">
    <property type="nucleotide sequence ID" value="NC_000907.1"/>
</dbReference>
<dbReference type="SMR" id="P44646"/>
<dbReference type="STRING" id="71421.HI_0338"/>
<dbReference type="EnsemblBacteria" id="AAC22000">
    <property type="protein sequence ID" value="AAC22000"/>
    <property type="gene ID" value="HI_0338"/>
</dbReference>
<dbReference type="KEGG" id="hin:HI_0338"/>
<dbReference type="PATRIC" id="fig|71421.8.peg.355"/>
<dbReference type="eggNOG" id="COG0628">
    <property type="taxonomic scope" value="Bacteria"/>
</dbReference>
<dbReference type="HOGENOM" id="CLU_031275_0_3_6"/>
<dbReference type="OrthoDB" id="9799225at2"/>
<dbReference type="PhylomeDB" id="P44646"/>
<dbReference type="BioCyc" id="HINF71421:G1GJ1-354-MONOMER"/>
<dbReference type="Proteomes" id="UP000000579">
    <property type="component" value="Chromosome"/>
</dbReference>
<dbReference type="GO" id="GO:0005886">
    <property type="term" value="C:plasma membrane"/>
    <property type="evidence" value="ECO:0007669"/>
    <property type="project" value="UniProtKB-SubCell"/>
</dbReference>
<dbReference type="GO" id="GO:0055085">
    <property type="term" value="P:transmembrane transport"/>
    <property type="evidence" value="ECO:0000318"/>
    <property type="project" value="GO_Central"/>
</dbReference>
<dbReference type="InterPro" id="IPR002549">
    <property type="entry name" value="AI-2E-like"/>
</dbReference>
<dbReference type="NCBIfam" id="NF008930">
    <property type="entry name" value="PRK12287.1"/>
    <property type="match status" value="1"/>
</dbReference>
<dbReference type="PANTHER" id="PTHR21716:SF64">
    <property type="entry name" value="AI-2 TRANSPORT PROTEIN TQSA"/>
    <property type="match status" value="1"/>
</dbReference>
<dbReference type="PANTHER" id="PTHR21716">
    <property type="entry name" value="TRANSMEMBRANE PROTEIN"/>
    <property type="match status" value="1"/>
</dbReference>
<dbReference type="Pfam" id="PF01594">
    <property type="entry name" value="AI-2E_transport"/>
    <property type="match status" value="1"/>
</dbReference>
<proteinExistence type="inferred from homology"/>
<organism>
    <name type="scientific">Haemophilus influenzae (strain ATCC 51907 / DSM 11121 / KW20 / Rd)</name>
    <dbReference type="NCBI Taxonomy" id="71421"/>
    <lineage>
        <taxon>Bacteria</taxon>
        <taxon>Pseudomonadati</taxon>
        <taxon>Pseudomonadota</taxon>
        <taxon>Gammaproteobacteria</taxon>
        <taxon>Pasteurellales</taxon>
        <taxon>Pasteurellaceae</taxon>
        <taxon>Haemophilus</taxon>
    </lineage>
</organism>
<feature type="chain" id="PRO_0000148303" description="Putative transport protein HI_0338">
    <location>
        <begin position="1"/>
        <end position="348"/>
    </location>
</feature>
<feature type="transmembrane region" description="Helical" evidence="1">
    <location>
        <begin position="7"/>
        <end position="27"/>
    </location>
</feature>
<feature type="transmembrane region" description="Helical" evidence="1">
    <location>
        <begin position="28"/>
        <end position="48"/>
    </location>
</feature>
<feature type="transmembrane region" description="Helical" evidence="1">
    <location>
        <begin position="60"/>
        <end position="80"/>
    </location>
</feature>
<feature type="transmembrane region" description="Helical" evidence="1">
    <location>
        <begin position="139"/>
        <end position="159"/>
    </location>
</feature>
<feature type="transmembrane region" description="Helical" evidence="1">
    <location>
        <begin position="196"/>
        <end position="216"/>
    </location>
</feature>
<feature type="transmembrane region" description="Helical" evidence="1">
    <location>
        <begin position="223"/>
        <end position="243"/>
    </location>
</feature>
<feature type="transmembrane region" description="Helical" evidence="1">
    <location>
        <begin position="245"/>
        <end position="265"/>
    </location>
</feature>
<feature type="transmembrane region" description="Helical" evidence="1">
    <location>
        <begin position="267"/>
        <end position="287"/>
    </location>
</feature>
<feature type="transmembrane region" description="Helical" evidence="1">
    <location>
        <begin position="296"/>
        <end position="316"/>
    </location>
</feature>
<evidence type="ECO:0000255" key="1"/>
<evidence type="ECO:0000305" key="2"/>